<organism>
    <name type="scientific">Nicotiana sylvestris</name>
    <name type="common">Wood tobacco</name>
    <name type="synonym">South American tobacco</name>
    <dbReference type="NCBI Taxonomy" id="4096"/>
    <lineage>
        <taxon>Eukaryota</taxon>
        <taxon>Viridiplantae</taxon>
        <taxon>Streptophyta</taxon>
        <taxon>Embryophyta</taxon>
        <taxon>Tracheophyta</taxon>
        <taxon>Spermatophyta</taxon>
        <taxon>Magnoliopsida</taxon>
        <taxon>eudicotyledons</taxon>
        <taxon>Gunneridae</taxon>
        <taxon>Pentapetalae</taxon>
        <taxon>asterids</taxon>
        <taxon>lamiids</taxon>
        <taxon>Solanales</taxon>
        <taxon>Solanaceae</taxon>
        <taxon>Nicotianoideae</taxon>
        <taxon>Nicotianeae</taxon>
        <taxon>Nicotiana</taxon>
    </lineage>
</organism>
<evidence type="ECO:0000255" key="1">
    <source>
        <dbReference type="PROSITE-ProRule" id="PRU00047"/>
    </source>
</evidence>
<evidence type="ECO:0000256" key="2">
    <source>
        <dbReference type="SAM" id="MobiDB-lite"/>
    </source>
</evidence>
<evidence type="ECO:0000305" key="3">
    <source>
    </source>
</evidence>
<proteinExistence type="evidence at transcript level"/>
<gene>
    <name type="primary">GRP-2</name>
</gene>
<comment type="caution">
    <text evidence="3">Was originally thought to be a cell wall structural protein.</text>
</comment>
<feature type="chain" id="PRO_0000100355" description="Glycine-rich protein 2">
    <location>
        <begin position="1"/>
        <end position="214"/>
    </location>
</feature>
<feature type="domain" description="CSD">
    <location>
        <begin position="8"/>
        <end position="75"/>
    </location>
</feature>
<feature type="zinc finger region" description="CCHC-type 1" evidence="1">
    <location>
        <begin position="157"/>
        <end position="174"/>
    </location>
</feature>
<feature type="zinc finger region" description="CCHC-type 2" evidence="1">
    <location>
        <begin position="194"/>
        <end position="211"/>
    </location>
</feature>
<feature type="region of interest" description="Disordered" evidence="2">
    <location>
        <begin position="54"/>
        <end position="91"/>
    </location>
</feature>
<feature type="compositionally biased region" description="Gly residues" evidence="2">
    <location>
        <begin position="80"/>
        <end position="91"/>
    </location>
</feature>
<name>GRP2_NICSY</name>
<reference key="1">
    <citation type="journal article" date="1991" name="Plant Mol. Biol.">
        <title>Nucleotide sequence of a cDNA clone encoding a putative glycine-rich protein of 19.7 kDa in Nicotiana sylvestris.</title>
        <authorList>
            <person name="Obokata J."/>
            <person name="Ohme M."/>
            <person name="Hayashida N."/>
        </authorList>
    </citation>
    <scope>NUCLEOTIDE SEQUENCE [MRNA]</scope>
</reference>
<keyword id="KW-0479">Metal-binding</keyword>
<keyword id="KW-1185">Reference proteome</keyword>
<keyword id="KW-0677">Repeat</keyword>
<keyword id="KW-0694">RNA-binding</keyword>
<keyword id="KW-0862">Zinc</keyword>
<keyword id="KW-0863">Zinc-finger</keyword>
<accession>P27484</accession>
<protein>
    <recommendedName>
        <fullName>Glycine-rich protein 2</fullName>
    </recommendedName>
</protein>
<dbReference type="EMBL" id="X60007">
    <property type="protein sequence ID" value="CAA42622.1"/>
    <property type="molecule type" value="mRNA"/>
</dbReference>
<dbReference type="PIR" id="S17731">
    <property type="entry name" value="KNNT2S"/>
</dbReference>
<dbReference type="RefSeq" id="NP_001298110.1">
    <property type="nucleotide sequence ID" value="NM_001311181.1"/>
</dbReference>
<dbReference type="SMR" id="P27484"/>
<dbReference type="STRING" id="4096.P27484"/>
<dbReference type="GeneID" id="104218376"/>
<dbReference type="KEGG" id="nsy:104218376"/>
<dbReference type="eggNOG" id="KOG3070">
    <property type="taxonomic scope" value="Eukaryota"/>
</dbReference>
<dbReference type="Proteomes" id="UP000189701">
    <property type="component" value="Unplaced"/>
</dbReference>
<dbReference type="GO" id="GO:0003723">
    <property type="term" value="F:RNA binding"/>
    <property type="evidence" value="ECO:0007669"/>
    <property type="project" value="UniProtKB-KW"/>
</dbReference>
<dbReference type="GO" id="GO:0008270">
    <property type="term" value="F:zinc ion binding"/>
    <property type="evidence" value="ECO:0007669"/>
    <property type="project" value="UniProtKB-KW"/>
</dbReference>
<dbReference type="CDD" id="cd04458">
    <property type="entry name" value="CSP_CDS"/>
    <property type="match status" value="1"/>
</dbReference>
<dbReference type="FunFam" id="2.40.50.140:FF:000382">
    <property type="entry name" value="Cold shock protein 1"/>
    <property type="match status" value="1"/>
</dbReference>
<dbReference type="Gene3D" id="2.40.50.140">
    <property type="entry name" value="Nucleic acid-binding proteins"/>
    <property type="match status" value="1"/>
</dbReference>
<dbReference type="Gene3D" id="4.10.60.10">
    <property type="entry name" value="Zinc finger, CCHC-type"/>
    <property type="match status" value="2"/>
</dbReference>
<dbReference type="InterPro" id="IPR011129">
    <property type="entry name" value="CSD"/>
</dbReference>
<dbReference type="InterPro" id="IPR019844">
    <property type="entry name" value="CSD_CS"/>
</dbReference>
<dbReference type="InterPro" id="IPR002059">
    <property type="entry name" value="CSP_DNA-bd"/>
</dbReference>
<dbReference type="InterPro" id="IPR012340">
    <property type="entry name" value="NA-bd_OB-fold"/>
</dbReference>
<dbReference type="InterPro" id="IPR001878">
    <property type="entry name" value="Znf_CCHC"/>
</dbReference>
<dbReference type="InterPro" id="IPR036875">
    <property type="entry name" value="Znf_CCHC_sf"/>
</dbReference>
<dbReference type="PANTHER" id="PTHR46565">
    <property type="entry name" value="COLD SHOCK DOMAIN PROTEIN 2"/>
    <property type="match status" value="1"/>
</dbReference>
<dbReference type="PANTHER" id="PTHR46565:SF20">
    <property type="entry name" value="COLD SHOCK DOMAIN-CONTAINING PROTEIN 4"/>
    <property type="match status" value="1"/>
</dbReference>
<dbReference type="Pfam" id="PF00313">
    <property type="entry name" value="CSD"/>
    <property type="match status" value="1"/>
</dbReference>
<dbReference type="Pfam" id="PF00098">
    <property type="entry name" value="zf-CCHC"/>
    <property type="match status" value="2"/>
</dbReference>
<dbReference type="PRINTS" id="PR00050">
    <property type="entry name" value="COLDSHOCK"/>
</dbReference>
<dbReference type="SMART" id="SM00357">
    <property type="entry name" value="CSP"/>
    <property type="match status" value="1"/>
</dbReference>
<dbReference type="SMART" id="SM00343">
    <property type="entry name" value="ZnF_C2HC"/>
    <property type="match status" value="2"/>
</dbReference>
<dbReference type="SUPFAM" id="SSF50249">
    <property type="entry name" value="Nucleic acid-binding proteins"/>
    <property type="match status" value="1"/>
</dbReference>
<dbReference type="SUPFAM" id="SSF57756">
    <property type="entry name" value="Retrovirus zinc finger-like domains"/>
    <property type="match status" value="1"/>
</dbReference>
<dbReference type="PROSITE" id="PS00352">
    <property type="entry name" value="CSD_1"/>
    <property type="match status" value="1"/>
</dbReference>
<dbReference type="PROSITE" id="PS51857">
    <property type="entry name" value="CSD_2"/>
    <property type="match status" value="1"/>
</dbReference>
<dbReference type="PROSITE" id="PS50158">
    <property type="entry name" value="ZF_CCHC"/>
    <property type="match status" value="2"/>
</dbReference>
<sequence>MAEESGQRAKGTVKWFSDQKGFGFITPDDGGEDLFVHQSGIRSEGFRSLAEGETVEFEVESGGDGRTKAVDVTGPDGAAVQGGRGGGGGGGGRGGGGYGGGSGGYGGGGRGGSRGYGGGDGGYGGGGGYGGGSRYGGGGGGYGGGGGYGGGGSGGGSGCFKCGESGHFARDCSQSGGGGGGGRFGGGGGGGGGGGCYKCGEDGHFARECTSGGR</sequence>